<keyword id="KW-0067">ATP-binding</keyword>
<keyword id="KW-0221">Differentiation</keyword>
<keyword id="KW-0469">Meiosis</keyword>
<keyword id="KW-0547">Nucleotide-binding</keyword>
<keyword id="KW-0896">Oogenesis</keyword>
<keyword id="KW-1185">Reference proteome</keyword>
<keyword id="KW-0744">Spermatogenesis</keyword>
<feature type="chain" id="PRO_0000410924" description="Pachytene checkpoint protein 2 homolog">
    <location>
        <begin position="1"/>
        <end position="424"/>
    </location>
</feature>
<feature type="binding site" evidence="2">
    <location>
        <begin position="171"/>
        <end position="178"/>
    </location>
    <ligand>
        <name>ATP</name>
        <dbReference type="ChEBI" id="CHEBI:30616"/>
    </ligand>
</feature>
<proteinExistence type="evidence at transcript level"/>
<protein>
    <recommendedName>
        <fullName>Pachytene checkpoint protein 2 homolog</fullName>
    </recommendedName>
    <alternativeName>
        <fullName>Thyroid hormone receptor interactor 13 homolog</fullName>
    </alternativeName>
    <alternativeName>
        <fullName>Thyroid receptor-interacting protein 13 homolog</fullName>
        <shortName>TR-interacting protein 13 homolog</shortName>
        <shortName>TRIP-13 homolog</shortName>
    </alternativeName>
</protein>
<evidence type="ECO:0000250" key="1">
    <source>
        <dbReference type="UniProtKB" id="Q3UA06"/>
    </source>
</evidence>
<evidence type="ECO:0000255" key="2"/>
<evidence type="ECO:0000305" key="3"/>
<sequence length="424" mass="47777">MDISDHHMTDVGIIRPDVHIEVHVKSQSTAKRSDVRTHVLSLLDRHSTVLRSFKWMDFDNEFLTKNVESVTIADVTGPKLVDLKVHNLCIHIFTLNDDSPSTLNLEEEEELSAANLWLLPAVEFHGVWESLIYEEGIKTQLLDYVSTTIFFSDKNVDSNLIAWNRVVLLHGPPGTGKTSLCKGLAQKLSIRLSDRYAHSQFVEINSHSLFSKWFSESGKLVTKMFQKIQELIDDKDALVFVLIDEVESLTAARSAAQAGTEPSDAIRVVNSVLTQLDQIKRHPNVVILTTSNVTEKIDLAFVDRADIKQYIGPPSAKAIFNIYLSSLEELMKRQIIYPRQQLVSLEELETMNFMESDVTRLSLCLMNISQRSVGLSGRALRKIPFLAHALYGKTSTMTLKGFLTAMEHAVNKQRQEQASLVNCV</sequence>
<reference key="1">
    <citation type="submission" date="2003-08" db="EMBL/GenBank/DDBJ databases">
        <authorList>
            <consortium name="NIH - Zebrafish Gene Collection (ZGC) project"/>
        </authorList>
    </citation>
    <scope>NUCLEOTIDE SEQUENCE [LARGE SCALE MRNA]</scope>
    <source>
        <tissue>Kidney</tissue>
    </source>
</reference>
<dbReference type="EMBL" id="BC056713">
    <property type="protein sequence ID" value="AAH56713.1"/>
    <property type="molecule type" value="mRNA"/>
</dbReference>
<dbReference type="RefSeq" id="NP_956876.1">
    <property type="nucleotide sequence ID" value="NM_200582.1"/>
</dbReference>
<dbReference type="SMR" id="Q6PH52"/>
<dbReference type="FunCoup" id="Q6PH52">
    <property type="interactions" value="2104"/>
</dbReference>
<dbReference type="IntAct" id="Q6PH52">
    <property type="interactions" value="1"/>
</dbReference>
<dbReference type="MINT" id="Q6PH52"/>
<dbReference type="STRING" id="7955.ENSDARP00000049098"/>
<dbReference type="PaxDb" id="7955-ENSDARP00000049098"/>
<dbReference type="GeneID" id="393554"/>
<dbReference type="KEGG" id="dre:393554"/>
<dbReference type="AGR" id="ZFIN:ZDB-GENE-040426-1488"/>
<dbReference type="CTD" id="9319"/>
<dbReference type="ZFIN" id="ZDB-GENE-040426-1488">
    <property type="gene designation" value="trip13"/>
</dbReference>
<dbReference type="eggNOG" id="KOG0744">
    <property type="taxonomic scope" value="Eukaryota"/>
</dbReference>
<dbReference type="InParanoid" id="Q6PH52"/>
<dbReference type="OrthoDB" id="10042665at2759"/>
<dbReference type="PhylomeDB" id="Q6PH52"/>
<dbReference type="PRO" id="PR:Q6PH52"/>
<dbReference type="Proteomes" id="UP000000437">
    <property type="component" value="Chromosome 16"/>
</dbReference>
<dbReference type="GO" id="GO:0005694">
    <property type="term" value="C:chromosome"/>
    <property type="evidence" value="ECO:0000318"/>
    <property type="project" value="GO_Central"/>
</dbReference>
<dbReference type="GO" id="GO:0005634">
    <property type="term" value="C:nucleus"/>
    <property type="evidence" value="ECO:0000318"/>
    <property type="project" value="GO_Central"/>
</dbReference>
<dbReference type="GO" id="GO:0005524">
    <property type="term" value="F:ATP binding"/>
    <property type="evidence" value="ECO:0007669"/>
    <property type="project" value="UniProtKB-KW"/>
</dbReference>
<dbReference type="GO" id="GO:0016887">
    <property type="term" value="F:ATP hydrolysis activity"/>
    <property type="evidence" value="ECO:0007669"/>
    <property type="project" value="InterPro"/>
</dbReference>
<dbReference type="GO" id="GO:0009653">
    <property type="term" value="P:anatomical structure morphogenesis"/>
    <property type="evidence" value="ECO:0007669"/>
    <property type="project" value="UniProtKB-ARBA"/>
</dbReference>
<dbReference type="GO" id="GO:0006302">
    <property type="term" value="P:double-strand break repair"/>
    <property type="evidence" value="ECO:0000250"/>
    <property type="project" value="UniProtKB"/>
</dbReference>
<dbReference type="GO" id="GO:0051598">
    <property type="term" value="P:meiotic recombination checkpoint signaling"/>
    <property type="evidence" value="ECO:0000318"/>
    <property type="project" value="GO_Central"/>
</dbReference>
<dbReference type="GO" id="GO:0048477">
    <property type="term" value="P:oogenesis"/>
    <property type="evidence" value="ECO:0000250"/>
    <property type="project" value="UniProtKB"/>
</dbReference>
<dbReference type="GO" id="GO:0007131">
    <property type="term" value="P:reciprocal meiotic recombination"/>
    <property type="evidence" value="ECO:0000250"/>
    <property type="project" value="UniProtKB"/>
</dbReference>
<dbReference type="GO" id="GO:0007283">
    <property type="term" value="P:spermatogenesis"/>
    <property type="evidence" value="ECO:0000250"/>
    <property type="project" value="UniProtKB"/>
</dbReference>
<dbReference type="GO" id="GO:0007130">
    <property type="term" value="P:synaptonemal complex assembly"/>
    <property type="evidence" value="ECO:0000250"/>
    <property type="project" value="UniProtKB"/>
</dbReference>
<dbReference type="CDD" id="cd19508">
    <property type="entry name" value="RecA-like_Pch2-like"/>
    <property type="match status" value="1"/>
</dbReference>
<dbReference type="FunFam" id="3.40.50.300:FF:000662">
    <property type="entry name" value="Pachytene checkpoint protein 2 homolog"/>
    <property type="match status" value="1"/>
</dbReference>
<dbReference type="Gene3D" id="3.40.50.300">
    <property type="entry name" value="P-loop containing nucleotide triphosphate hydrolases"/>
    <property type="match status" value="1"/>
</dbReference>
<dbReference type="InterPro" id="IPR003593">
    <property type="entry name" value="AAA+_ATPase"/>
</dbReference>
<dbReference type="InterPro" id="IPR003959">
    <property type="entry name" value="ATPase_AAA_core"/>
</dbReference>
<dbReference type="InterPro" id="IPR003960">
    <property type="entry name" value="ATPase_AAA_CS"/>
</dbReference>
<dbReference type="InterPro" id="IPR027417">
    <property type="entry name" value="P-loop_NTPase"/>
</dbReference>
<dbReference type="InterPro" id="IPR044539">
    <property type="entry name" value="Pch2-like"/>
</dbReference>
<dbReference type="PANTHER" id="PTHR45991">
    <property type="entry name" value="PACHYTENE CHECKPOINT PROTEIN 2"/>
    <property type="match status" value="1"/>
</dbReference>
<dbReference type="PANTHER" id="PTHR45991:SF1">
    <property type="entry name" value="PACHYTENE CHECKPOINT PROTEIN 2 HOMOLOG"/>
    <property type="match status" value="1"/>
</dbReference>
<dbReference type="Pfam" id="PF00004">
    <property type="entry name" value="AAA"/>
    <property type="match status" value="1"/>
</dbReference>
<dbReference type="Pfam" id="PF23242">
    <property type="entry name" value="AAA_lid_TRIP13_C"/>
    <property type="match status" value="1"/>
</dbReference>
<dbReference type="Pfam" id="PF23563">
    <property type="entry name" value="TRIP13_N"/>
    <property type="match status" value="1"/>
</dbReference>
<dbReference type="SMART" id="SM00382">
    <property type="entry name" value="AAA"/>
    <property type="match status" value="1"/>
</dbReference>
<dbReference type="SUPFAM" id="SSF52540">
    <property type="entry name" value="P-loop containing nucleoside triphosphate hydrolases"/>
    <property type="match status" value="1"/>
</dbReference>
<dbReference type="PROSITE" id="PS00674">
    <property type="entry name" value="AAA"/>
    <property type="match status" value="1"/>
</dbReference>
<gene>
    <name type="primary">trip13</name>
    <name type="synonym">pch2</name>
    <name type="ORF">zgc:65952</name>
</gene>
<comment type="function">
    <text evidence="1">Plays a key role in chromosome recombination and chromosome structure development during meiosis. Required at early steps in meiotic recombination that leads to non-crossovers pathways. Also needed for efficient completion of homologous synapsis by influencing crossover distribution along the chromosomes affecting both crossovers and non-crossovers pathways (By similarity).</text>
</comment>
<comment type="similarity">
    <text evidence="3">Belongs to the AAA ATPase family. PCH2 subfamily.</text>
</comment>
<name>PCH2_DANRE</name>
<accession>Q6PH52</accession>
<organism>
    <name type="scientific">Danio rerio</name>
    <name type="common">Zebrafish</name>
    <name type="synonym">Brachydanio rerio</name>
    <dbReference type="NCBI Taxonomy" id="7955"/>
    <lineage>
        <taxon>Eukaryota</taxon>
        <taxon>Metazoa</taxon>
        <taxon>Chordata</taxon>
        <taxon>Craniata</taxon>
        <taxon>Vertebrata</taxon>
        <taxon>Euteleostomi</taxon>
        <taxon>Actinopterygii</taxon>
        <taxon>Neopterygii</taxon>
        <taxon>Teleostei</taxon>
        <taxon>Ostariophysi</taxon>
        <taxon>Cypriniformes</taxon>
        <taxon>Danionidae</taxon>
        <taxon>Danioninae</taxon>
        <taxon>Danio</taxon>
    </lineage>
</organism>